<reference key="1">
    <citation type="submission" date="2006-03" db="EMBL/GenBank/DDBJ databases">
        <title>Complete genome sequence of Francisella tularensis LVS (Live Vaccine Strain).</title>
        <authorList>
            <person name="Chain P."/>
            <person name="Larimer F."/>
            <person name="Land M."/>
            <person name="Stilwagen S."/>
            <person name="Larsson P."/>
            <person name="Bearden S."/>
            <person name="Chu M."/>
            <person name="Oyston P."/>
            <person name="Forsman M."/>
            <person name="Andersson S."/>
            <person name="Lindler L."/>
            <person name="Titball R."/>
            <person name="Garcia E."/>
        </authorList>
    </citation>
    <scope>NUCLEOTIDE SEQUENCE [LARGE SCALE GENOMIC DNA]</scope>
    <source>
        <strain>LVS</strain>
    </source>
</reference>
<organism>
    <name type="scientific">Francisella tularensis subsp. holarctica (strain LVS)</name>
    <dbReference type="NCBI Taxonomy" id="376619"/>
    <lineage>
        <taxon>Bacteria</taxon>
        <taxon>Pseudomonadati</taxon>
        <taxon>Pseudomonadota</taxon>
        <taxon>Gammaproteobacteria</taxon>
        <taxon>Thiotrichales</taxon>
        <taxon>Francisellaceae</taxon>
        <taxon>Francisella</taxon>
    </lineage>
</organism>
<accession>Q2A4Z5</accession>
<sequence length="161" mass="18181">MNLLRPKLKYFILAILIIAADLYTKYLANTYLEFAQSLKITSFFNLTLLYNHGAAFSLLSNDQTSWQMIMFSTISLIAAIVLIYLIIKQPITEKINLFSFALILGGALGNFYDRAFQGYVIDFLDFHIGNYHWPSFNIADSAITCGVVILIAASLFTKKKS</sequence>
<protein>
    <recommendedName>
        <fullName evidence="1">Lipoprotein signal peptidase</fullName>
        <ecNumber evidence="1">3.4.23.36</ecNumber>
    </recommendedName>
    <alternativeName>
        <fullName evidence="1">Prolipoprotein signal peptidase</fullName>
    </alternativeName>
    <alternativeName>
        <fullName evidence="1">Signal peptidase II</fullName>
        <shortName evidence="1">SPase II</shortName>
    </alternativeName>
</protein>
<dbReference type="EC" id="3.4.23.36" evidence="1"/>
<dbReference type="EMBL" id="AM233362">
    <property type="protein sequence ID" value="CAJ78875.1"/>
    <property type="molecule type" value="Genomic_DNA"/>
</dbReference>
<dbReference type="RefSeq" id="WP_003014705.1">
    <property type="nucleotide sequence ID" value="NZ_CP009694.1"/>
</dbReference>
<dbReference type="SMR" id="Q2A4Z5"/>
<dbReference type="KEGG" id="ftl:FTL_0435"/>
<dbReference type="UniPathway" id="UPA00665"/>
<dbReference type="Proteomes" id="UP000001944">
    <property type="component" value="Chromosome"/>
</dbReference>
<dbReference type="GO" id="GO:0005886">
    <property type="term" value="C:plasma membrane"/>
    <property type="evidence" value="ECO:0007669"/>
    <property type="project" value="UniProtKB-SubCell"/>
</dbReference>
<dbReference type="GO" id="GO:0004190">
    <property type="term" value="F:aspartic-type endopeptidase activity"/>
    <property type="evidence" value="ECO:0007669"/>
    <property type="project" value="UniProtKB-UniRule"/>
</dbReference>
<dbReference type="GO" id="GO:0006508">
    <property type="term" value="P:proteolysis"/>
    <property type="evidence" value="ECO:0007669"/>
    <property type="project" value="UniProtKB-KW"/>
</dbReference>
<dbReference type="HAMAP" id="MF_00161">
    <property type="entry name" value="LspA"/>
    <property type="match status" value="1"/>
</dbReference>
<dbReference type="InterPro" id="IPR001872">
    <property type="entry name" value="Peptidase_A8"/>
</dbReference>
<dbReference type="NCBIfam" id="TIGR00077">
    <property type="entry name" value="lspA"/>
    <property type="match status" value="1"/>
</dbReference>
<dbReference type="PANTHER" id="PTHR33695">
    <property type="entry name" value="LIPOPROTEIN SIGNAL PEPTIDASE"/>
    <property type="match status" value="1"/>
</dbReference>
<dbReference type="PANTHER" id="PTHR33695:SF1">
    <property type="entry name" value="LIPOPROTEIN SIGNAL PEPTIDASE"/>
    <property type="match status" value="1"/>
</dbReference>
<dbReference type="Pfam" id="PF01252">
    <property type="entry name" value="Peptidase_A8"/>
    <property type="match status" value="1"/>
</dbReference>
<dbReference type="PRINTS" id="PR00781">
    <property type="entry name" value="LIPOSIGPTASE"/>
</dbReference>
<dbReference type="PROSITE" id="PS00855">
    <property type="entry name" value="SPASE_II"/>
    <property type="match status" value="1"/>
</dbReference>
<evidence type="ECO:0000255" key="1">
    <source>
        <dbReference type="HAMAP-Rule" id="MF_00161"/>
    </source>
</evidence>
<keyword id="KW-0064">Aspartyl protease</keyword>
<keyword id="KW-0997">Cell inner membrane</keyword>
<keyword id="KW-1003">Cell membrane</keyword>
<keyword id="KW-0378">Hydrolase</keyword>
<keyword id="KW-0472">Membrane</keyword>
<keyword id="KW-0645">Protease</keyword>
<keyword id="KW-1185">Reference proteome</keyword>
<keyword id="KW-0812">Transmembrane</keyword>
<keyword id="KW-1133">Transmembrane helix</keyword>
<proteinExistence type="inferred from homology"/>
<name>LSPA_FRATH</name>
<comment type="function">
    <text evidence="1">This protein specifically catalyzes the removal of signal peptides from prolipoproteins.</text>
</comment>
<comment type="catalytic activity">
    <reaction evidence="1">
        <text>Release of signal peptides from bacterial membrane prolipoproteins. Hydrolyzes -Xaa-Yaa-Zaa-|-(S,diacylglyceryl)Cys-, in which Xaa is hydrophobic (preferably Leu), and Yaa (Ala or Ser) and Zaa (Gly or Ala) have small, neutral side chains.</text>
        <dbReference type="EC" id="3.4.23.36"/>
    </reaction>
</comment>
<comment type="pathway">
    <text evidence="1">Protein modification; lipoprotein biosynthesis (signal peptide cleavage).</text>
</comment>
<comment type="subcellular location">
    <subcellularLocation>
        <location evidence="1">Cell inner membrane</location>
        <topology evidence="1">Multi-pass membrane protein</topology>
    </subcellularLocation>
</comment>
<comment type="similarity">
    <text evidence="1">Belongs to the peptidase A8 family.</text>
</comment>
<feature type="chain" id="PRO_0000289379" description="Lipoprotein signal peptidase">
    <location>
        <begin position="1"/>
        <end position="161"/>
    </location>
</feature>
<feature type="transmembrane region" description="Helical" evidence="1">
    <location>
        <begin position="8"/>
        <end position="28"/>
    </location>
</feature>
<feature type="transmembrane region" description="Helical" evidence="1">
    <location>
        <begin position="40"/>
        <end position="60"/>
    </location>
</feature>
<feature type="transmembrane region" description="Helical" evidence="1">
    <location>
        <begin position="67"/>
        <end position="87"/>
    </location>
</feature>
<feature type="transmembrane region" description="Helical" evidence="1">
    <location>
        <begin position="91"/>
        <end position="111"/>
    </location>
</feature>
<feature type="transmembrane region" description="Helical" evidence="1">
    <location>
        <begin position="136"/>
        <end position="156"/>
    </location>
</feature>
<feature type="active site" evidence="1">
    <location>
        <position position="122"/>
    </location>
</feature>
<feature type="active site" evidence="1">
    <location>
        <position position="140"/>
    </location>
</feature>
<gene>
    <name evidence="1" type="primary">lspA</name>
    <name type="ordered locus">FTL_0435</name>
</gene>